<organism>
    <name type="scientific">Gallus gallus</name>
    <name type="common">Chicken</name>
    <dbReference type="NCBI Taxonomy" id="9031"/>
    <lineage>
        <taxon>Eukaryota</taxon>
        <taxon>Metazoa</taxon>
        <taxon>Chordata</taxon>
        <taxon>Craniata</taxon>
        <taxon>Vertebrata</taxon>
        <taxon>Euteleostomi</taxon>
        <taxon>Archelosauria</taxon>
        <taxon>Archosauria</taxon>
        <taxon>Dinosauria</taxon>
        <taxon>Saurischia</taxon>
        <taxon>Theropoda</taxon>
        <taxon>Coelurosauria</taxon>
        <taxon>Aves</taxon>
        <taxon>Neognathae</taxon>
        <taxon>Galloanserae</taxon>
        <taxon>Galliformes</taxon>
        <taxon>Phasianidae</taxon>
        <taxon>Phasianinae</taxon>
        <taxon>Gallus</taxon>
    </lineage>
</organism>
<reference key="1">
    <citation type="journal article" date="2005" name="Genome Biol.">
        <title>Full-length cDNAs from chicken bursal lymphocytes to facilitate gene function analysis.</title>
        <authorList>
            <person name="Caldwell R.B."/>
            <person name="Kierzek A.M."/>
            <person name="Arakawa H."/>
            <person name="Bezzubov Y."/>
            <person name="Zaim J."/>
            <person name="Fiedler P."/>
            <person name="Kutter S."/>
            <person name="Blagodatski A."/>
            <person name="Kostovska D."/>
            <person name="Koter M."/>
            <person name="Plachy J."/>
            <person name="Carninci P."/>
            <person name="Hayashizaki Y."/>
            <person name="Buerstedde J.-M."/>
        </authorList>
    </citation>
    <scope>NUCLEOTIDE SEQUENCE [LARGE SCALE MRNA]</scope>
    <source>
        <strain>CB</strain>
        <tissue>Bursa of Fabricius</tissue>
    </source>
</reference>
<evidence type="ECO:0000250" key="1"/>
<evidence type="ECO:0000305" key="2"/>
<sequence>MKVKVISVLEDNYMYLVIEESTRDAVAVDAAVPKRLLEIVRKEDVVLRAVLITHHHWDHARGNEELVRLCPGLRVYGADERIGALTHRVAPDEELTFGAIRVRCLFTPCHTKGHMCYFMWEDGSLDAPALFSGDTLFVGGCGQFLEGTAEQMYTNLTQVLGDLPKETKVFCGHECTVRNLKFALKVEPENEAVKKKLAWARQRDDEDLPTVPSTLQEEFLYNPFLRVTEEAVQKFTGRKEPVEVLRALRTEKDNFKKPKERPHPQAMLAFDWGLFAPFLEKK</sequence>
<dbReference type="EC" id="3.1.2.-"/>
<dbReference type="EMBL" id="AJ719602">
    <property type="protein sequence ID" value="CAG31261.1"/>
    <property type="molecule type" value="mRNA"/>
</dbReference>
<dbReference type="EMBL" id="AJ851726">
    <property type="protein sequence ID" value="CAH65360.1"/>
    <property type="molecule type" value="mRNA"/>
</dbReference>
<dbReference type="RefSeq" id="NP_001025808.1">
    <property type="nucleotide sequence ID" value="NM_001030637.2"/>
</dbReference>
<dbReference type="SMR" id="Q5ZLY2"/>
<dbReference type="FunCoup" id="Q5ZLY2">
    <property type="interactions" value="241"/>
</dbReference>
<dbReference type="STRING" id="9031.ENSGALP00000008654"/>
<dbReference type="PaxDb" id="9031-ENSGALP00000008654"/>
<dbReference type="Ensembl" id="ENSGALT00010045037.1">
    <property type="protein sequence ID" value="ENSGALP00010026906.1"/>
    <property type="gene ID" value="ENSGALG00010018607.1"/>
</dbReference>
<dbReference type="GeneID" id="416536"/>
<dbReference type="KEGG" id="gga:416536"/>
<dbReference type="CTD" id="84264"/>
<dbReference type="VEuPathDB" id="HostDB:geneid_416536"/>
<dbReference type="eggNOG" id="KOG0813">
    <property type="taxonomic scope" value="Eukaryota"/>
</dbReference>
<dbReference type="GeneTree" id="ENSGT00940000161924"/>
<dbReference type="HOGENOM" id="CLU_030571_4_0_1"/>
<dbReference type="InParanoid" id="Q5ZLY2"/>
<dbReference type="OMA" id="CKERARF"/>
<dbReference type="OrthoDB" id="515692at2759"/>
<dbReference type="PhylomeDB" id="Q5ZLY2"/>
<dbReference type="TreeFam" id="TF105273"/>
<dbReference type="PRO" id="PR:Q5ZLY2"/>
<dbReference type="Proteomes" id="UP000000539">
    <property type="component" value="Chromosome 14"/>
</dbReference>
<dbReference type="Bgee" id="ENSGALG00000021040">
    <property type="expression patterns" value="Expressed in lung and 13 other cell types or tissues"/>
</dbReference>
<dbReference type="GO" id="GO:0004416">
    <property type="term" value="F:hydroxyacylglutathione hydrolase activity"/>
    <property type="evidence" value="ECO:0000318"/>
    <property type="project" value="GO_Central"/>
</dbReference>
<dbReference type="GO" id="GO:0046872">
    <property type="term" value="F:metal ion binding"/>
    <property type="evidence" value="ECO:0007669"/>
    <property type="project" value="UniProtKB-KW"/>
</dbReference>
<dbReference type="GO" id="GO:0019243">
    <property type="term" value="P:methylglyoxal catabolic process to D-lactate via S-lactoyl-glutathione"/>
    <property type="evidence" value="ECO:0007669"/>
    <property type="project" value="InterPro"/>
</dbReference>
<dbReference type="CDD" id="cd07723">
    <property type="entry name" value="hydroxyacylglutathione_hydrolase_MBL-fold"/>
    <property type="match status" value="1"/>
</dbReference>
<dbReference type="FunFam" id="3.60.15.10:FF:000019">
    <property type="entry name" value="Hydroxyacylglutathione hydrolase, mitochondrial"/>
    <property type="match status" value="1"/>
</dbReference>
<dbReference type="Gene3D" id="3.60.15.10">
    <property type="entry name" value="Ribonuclease Z/Hydroxyacylglutathione hydrolase-like"/>
    <property type="match status" value="1"/>
</dbReference>
<dbReference type="HAMAP" id="MF_01374">
    <property type="entry name" value="Glyoxalase_2"/>
    <property type="match status" value="1"/>
</dbReference>
<dbReference type="InterPro" id="IPR035680">
    <property type="entry name" value="Clx_II_MBL"/>
</dbReference>
<dbReference type="InterPro" id="IPR032282">
    <property type="entry name" value="HAGH_C"/>
</dbReference>
<dbReference type="InterPro" id="IPR017782">
    <property type="entry name" value="Hydroxyacylglutathione_Hdrlase"/>
</dbReference>
<dbReference type="InterPro" id="IPR001279">
    <property type="entry name" value="Metallo-B-lactamas"/>
</dbReference>
<dbReference type="InterPro" id="IPR036866">
    <property type="entry name" value="RibonucZ/Hydroxyglut_hydro"/>
</dbReference>
<dbReference type="NCBIfam" id="TIGR03413">
    <property type="entry name" value="GSH_gloB"/>
    <property type="match status" value="1"/>
</dbReference>
<dbReference type="PANTHER" id="PTHR11935">
    <property type="entry name" value="BETA LACTAMASE DOMAIN"/>
    <property type="match status" value="1"/>
</dbReference>
<dbReference type="PANTHER" id="PTHR11935:SF77">
    <property type="entry name" value="HYDROXYACYLGLUTATHIONE HYDROLASE-LIKE PROTEIN"/>
    <property type="match status" value="1"/>
</dbReference>
<dbReference type="Pfam" id="PF16123">
    <property type="entry name" value="HAGH_C"/>
    <property type="match status" value="1"/>
</dbReference>
<dbReference type="Pfam" id="PF00753">
    <property type="entry name" value="Lactamase_B"/>
    <property type="match status" value="1"/>
</dbReference>
<dbReference type="SMART" id="SM00849">
    <property type="entry name" value="Lactamase_B"/>
    <property type="match status" value="1"/>
</dbReference>
<dbReference type="SUPFAM" id="SSF56281">
    <property type="entry name" value="Metallo-hydrolase/oxidoreductase"/>
    <property type="match status" value="1"/>
</dbReference>
<gene>
    <name type="primary">HAGHL</name>
    <name type="ORF">RCJMB04_21j14</name>
    <name type="ORF">RCJMB04_4h5</name>
</gene>
<name>HAGHL_CHICK</name>
<proteinExistence type="evidence at transcript level"/>
<keyword id="KW-0378">Hydrolase</keyword>
<keyword id="KW-0479">Metal-binding</keyword>
<keyword id="KW-1185">Reference proteome</keyword>
<keyword id="KW-0862">Zinc</keyword>
<comment type="function">
    <text evidence="2">Hydrolase acting on ester bonds.</text>
</comment>
<comment type="cofactor">
    <cofactor evidence="1">
        <name>Zn(2+)</name>
        <dbReference type="ChEBI" id="CHEBI:29105"/>
    </cofactor>
    <text evidence="1">Binds 2 Zn(2+) ions per subunit.</text>
</comment>
<comment type="similarity">
    <text evidence="2">Belongs to the metallo-beta-lactamase superfamily. Glyoxalase II family.</text>
</comment>
<feature type="chain" id="PRO_0000313603" description="Hydroxyacylglutathione hydrolase-like protein">
    <location>
        <begin position="1"/>
        <end position="282"/>
    </location>
</feature>
<feature type="binding site" evidence="1">
    <location>
        <position position="54"/>
    </location>
    <ligand>
        <name>Zn(2+)</name>
        <dbReference type="ChEBI" id="CHEBI:29105"/>
        <label>1</label>
    </ligand>
</feature>
<feature type="binding site" evidence="1">
    <location>
        <position position="56"/>
    </location>
    <ligand>
        <name>Zn(2+)</name>
        <dbReference type="ChEBI" id="CHEBI:29105"/>
        <label>1</label>
    </ligand>
</feature>
<feature type="binding site" evidence="1">
    <location>
        <position position="58"/>
    </location>
    <ligand>
        <name>Zn(2+)</name>
        <dbReference type="ChEBI" id="CHEBI:29105"/>
        <label>2</label>
    </ligand>
</feature>
<feature type="binding site" evidence="1">
    <location>
        <position position="59"/>
    </location>
    <ligand>
        <name>Zn(2+)</name>
        <dbReference type="ChEBI" id="CHEBI:29105"/>
        <label>2</label>
    </ligand>
</feature>
<feature type="binding site" evidence="1">
    <location>
        <position position="110"/>
    </location>
    <ligand>
        <name>Zn(2+)</name>
        <dbReference type="ChEBI" id="CHEBI:29105"/>
        <label>1</label>
    </ligand>
</feature>
<feature type="binding site" evidence="1">
    <location>
        <position position="134"/>
    </location>
    <ligand>
        <name>Zn(2+)</name>
        <dbReference type="ChEBI" id="CHEBI:29105"/>
        <label>1</label>
    </ligand>
</feature>
<feature type="binding site" evidence="1">
    <location>
        <position position="134"/>
    </location>
    <ligand>
        <name>Zn(2+)</name>
        <dbReference type="ChEBI" id="CHEBI:29105"/>
        <label>2</label>
    </ligand>
</feature>
<feature type="binding site" evidence="1">
    <location>
        <position position="173"/>
    </location>
    <ligand>
        <name>Zn(2+)</name>
        <dbReference type="ChEBI" id="CHEBI:29105"/>
        <label>2</label>
    </ligand>
</feature>
<accession>Q5ZLY2</accession>
<protein>
    <recommendedName>
        <fullName>Hydroxyacylglutathione hydrolase-like protein</fullName>
        <ecNumber>3.1.2.-</ecNumber>
    </recommendedName>
</protein>